<sequence length="501" mass="53610">MTIASDAWQALADWQPQKLTDLVAADPDARLQALVRNVADIRFDFAKTHLDAAAIAILANLAEAQDFGGRRKTLFSGGIANPTENRAAEHSAERGDGAPESVHAAQALHQRMRMMIDAIEAGAFGEIRHLLHIGIGGSALGPDLLVDALGRHSDRYDVAVVSNVDGAALDEAFAKFSPEHTLVAVASKTFTTTETLLNANSALQWLDEAGVADPVGRFIALTANPGRAMEWGIDETRILPFSETVGGRYSLWSSIGFPAALALGWDAFADLLEGAAEMDRHFRLADGADNICLLAAFADQVYANRLGCQTRAVFAYDERLRLLPAYLQQLEMESNGKSVTLDGAPLAQHSAPVTWGGVGTDAQHAVFQLLHQGTHLVPVEFIVAREPDHLLDDAHHETLVANCIAQGAALMAGRASDDRARAYPGDRPSTTILLDQVSPRSLGALIAFYEHRVFANAVLLGVNPFDQFGVELGKEMAKGLAEGTVDFDPATQALMKAALGD</sequence>
<comment type="function">
    <text evidence="1">Catalyzes the reversible isomerization of glucose-6-phosphate to fructose-6-phosphate.</text>
</comment>
<comment type="catalytic activity">
    <reaction evidence="1">
        <text>alpha-D-glucose 6-phosphate = beta-D-fructose 6-phosphate</text>
        <dbReference type="Rhea" id="RHEA:11816"/>
        <dbReference type="ChEBI" id="CHEBI:57634"/>
        <dbReference type="ChEBI" id="CHEBI:58225"/>
        <dbReference type="EC" id="5.3.1.9"/>
    </reaction>
</comment>
<comment type="pathway">
    <text evidence="1">Carbohydrate biosynthesis; gluconeogenesis.</text>
</comment>
<comment type="pathway">
    <text evidence="1">Carbohydrate degradation; glycolysis; D-glyceraldehyde 3-phosphate and glycerone phosphate from D-glucose: step 2/4.</text>
</comment>
<comment type="subcellular location">
    <subcellularLocation>
        <location evidence="1">Cytoplasm</location>
    </subcellularLocation>
</comment>
<comment type="similarity">
    <text evidence="1">Belongs to the GPI family.</text>
</comment>
<dbReference type="EC" id="5.3.1.9" evidence="1"/>
<dbReference type="EMBL" id="CP000356">
    <property type="protein sequence ID" value="ABF52931.1"/>
    <property type="molecule type" value="Genomic_DNA"/>
</dbReference>
<dbReference type="RefSeq" id="WP_011541516.1">
    <property type="nucleotide sequence ID" value="NC_008048.1"/>
</dbReference>
<dbReference type="SMR" id="Q1GTU1"/>
<dbReference type="STRING" id="317655.Sala_1215"/>
<dbReference type="KEGG" id="sal:Sala_1215"/>
<dbReference type="eggNOG" id="COG0166">
    <property type="taxonomic scope" value="Bacteria"/>
</dbReference>
<dbReference type="HOGENOM" id="CLU_017947_3_1_5"/>
<dbReference type="OrthoDB" id="140919at2"/>
<dbReference type="UniPathway" id="UPA00109">
    <property type="reaction ID" value="UER00181"/>
</dbReference>
<dbReference type="UniPathway" id="UPA00138"/>
<dbReference type="Proteomes" id="UP000006578">
    <property type="component" value="Chromosome"/>
</dbReference>
<dbReference type="GO" id="GO:0005829">
    <property type="term" value="C:cytosol"/>
    <property type="evidence" value="ECO:0007669"/>
    <property type="project" value="TreeGrafter"/>
</dbReference>
<dbReference type="GO" id="GO:0097367">
    <property type="term" value="F:carbohydrate derivative binding"/>
    <property type="evidence" value="ECO:0007669"/>
    <property type="project" value="InterPro"/>
</dbReference>
<dbReference type="GO" id="GO:0004347">
    <property type="term" value="F:glucose-6-phosphate isomerase activity"/>
    <property type="evidence" value="ECO:0007669"/>
    <property type="project" value="UniProtKB-UniRule"/>
</dbReference>
<dbReference type="GO" id="GO:0048029">
    <property type="term" value="F:monosaccharide binding"/>
    <property type="evidence" value="ECO:0007669"/>
    <property type="project" value="TreeGrafter"/>
</dbReference>
<dbReference type="GO" id="GO:0006094">
    <property type="term" value="P:gluconeogenesis"/>
    <property type="evidence" value="ECO:0007669"/>
    <property type="project" value="UniProtKB-UniRule"/>
</dbReference>
<dbReference type="GO" id="GO:0051156">
    <property type="term" value="P:glucose 6-phosphate metabolic process"/>
    <property type="evidence" value="ECO:0007669"/>
    <property type="project" value="TreeGrafter"/>
</dbReference>
<dbReference type="GO" id="GO:0006096">
    <property type="term" value="P:glycolytic process"/>
    <property type="evidence" value="ECO:0007669"/>
    <property type="project" value="UniProtKB-UniRule"/>
</dbReference>
<dbReference type="CDD" id="cd05015">
    <property type="entry name" value="SIS_PGI_1"/>
    <property type="match status" value="1"/>
</dbReference>
<dbReference type="CDD" id="cd05016">
    <property type="entry name" value="SIS_PGI_2"/>
    <property type="match status" value="1"/>
</dbReference>
<dbReference type="Gene3D" id="1.10.1390.10">
    <property type="match status" value="1"/>
</dbReference>
<dbReference type="Gene3D" id="3.40.50.10490">
    <property type="entry name" value="Glucose-6-phosphate isomerase like protein, domain 1"/>
    <property type="match status" value="2"/>
</dbReference>
<dbReference type="HAMAP" id="MF_00473">
    <property type="entry name" value="G6P_isomerase"/>
    <property type="match status" value="1"/>
</dbReference>
<dbReference type="InterPro" id="IPR001672">
    <property type="entry name" value="G6P_Isomerase"/>
</dbReference>
<dbReference type="InterPro" id="IPR023096">
    <property type="entry name" value="G6P_Isomerase_C"/>
</dbReference>
<dbReference type="InterPro" id="IPR018189">
    <property type="entry name" value="Phosphoglucose_isomerase_CS"/>
</dbReference>
<dbReference type="InterPro" id="IPR046348">
    <property type="entry name" value="SIS_dom_sf"/>
</dbReference>
<dbReference type="InterPro" id="IPR035476">
    <property type="entry name" value="SIS_PGI_1"/>
</dbReference>
<dbReference type="InterPro" id="IPR035482">
    <property type="entry name" value="SIS_PGI_2"/>
</dbReference>
<dbReference type="NCBIfam" id="NF001211">
    <property type="entry name" value="PRK00179.1"/>
    <property type="match status" value="1"/>
</dbReference>
<dbReference type="PANTHER" id="PTHR11469">
    <property type="entry name" value="GLUCOSE-6-PHOSPHATE ISOMERASE"/>
    <property type="match status" value="1"/>
</dbReference>
<dbReference type="PANTHER" id="PTHR11469:SF1">
    <property type="entry name" value="GLUCOSE-6-PHOSPHATE ISOMERASE"/>
    <property type="match status" value="1"/>
</dbReference>
<dbReference type="Pfam" id="PF00342">
    <property type="entry name" value="PGI"/>
    <property type="match status" value="1"/>
</dbReference>
<dbReference type="PRINTS" id="PR00662">
    <property type="entry name" value="G6PISOMERASE"/>
</dbReference>
<dbReference type="SUPFAM" id="SSF53697">
    <property type="entry name" value="SIS domain"/>
    <property type="match status" value="1"/>
</dbReference>
<dbReference type="PROSITE" id="PS00765">
    <property type="entry name" value="P_GLUCOSE_ISOMERASE_1"/>
    <property type="match status" value="1"/>
</dbReference>
<dbReference type="PROSITE" id="PS00174">
    <property type="entry name" value="P_GLUCOSE_ISOMERASE_2"/>
    <property type="match status" value="1"/>
</dbReference>
<dbReference type="PROSITE" id="PS51463">
    <property type="entry name" value="P_GLUCOSE_ISOMERASE_3"/>
    <property type="match status" value="1"/>
</dbReference>
<organism>
    <name type="scientific">Sphingopyxis alaskensis (strain DSM 13593 / LMG 18877 / RB2256)</name>
    <name type="common">Sphingomonas alaskensis</name>
    <dbReference type="NCBI Taxonomy" id="317655"/>
    <lineage>
        <taxon>Bacteria</taxon>
        <taxon>Pseudomonadati</taxon>
        <taxon>Pseudomonadota</taxon>
        <taxon>Alphaproteobacteria</taxon>
        <taxon>Sphingomonadales</taxon>
        <taxon>Sphingomonadaceae</taxon>
        <taxon>Sphingopyxis</taxon>
    </lineage>
</organism>
<proteinExistence type="inferred from homology"/>
<accession>Q1GTU1</accession>
<evidence type="ECO:0000255" key="1">
    <source>
        <dbReference type="HAMAP-Rule" id="MF_00473"/>
    </source>
</evidence>
<evidence type="ECO:0000256" key="2">
    <source>
        <dbReference type="SAM" id="MobiDB-lite"/>
    </source>
</evidence>
<name>G6PI_SPHAL</name>
<keyword id="KW-0963">Cytoplasm</keyword>
<keyword id="KW-0312">Gluconeogenesis</keyword>
<keyword id="KW-0324">Glycolysis</keyword>
<keyword id="KW-0413">Isomerase</keyword>
<keyword id="KW-1185">Reference proteome</keyword>
<feature type="chain" id="PRO_0000252647" description="Glucose-6-phosphate isomerase">
    <location>
        <begin position="1"/>
        <end position="501"/>
    </location>
</feature>
<feature type="region of interest" description="Disordered" evidence="2">
    <location>
        <begin position="78"/>
        <end position="101"/>
    </location>
</feature>
<feature type="compositionally biased region" description="Basic and acidic residues" evidence="2">
    <location>
        <begin position="86"/>
        <end position="97"/>
    </location>
</feature>
<feature type="active site" description="Proton donor" evidence="1">
    <location>
        <position position="333"/>
    </location>
</feature>
<feature type="active site" evidence="1">
    <location>
        <position position="364"/>
    </location>
</feature>
<feature type="active site" evidence="1">
    <location>
        <position position="474"/>
    </location>
</feature>
<protein>
    <recommendedName>
        <fullName evidence="1">Glucose-6-phosphate isomerase</fullName>
        <shortName evidence="1">GPI</shortName>
        <ecNumber evidence="1">5.3.1.9</ecNumber>
    </recommendedName>
    <alternativeName>
        <fullName evidence="1">Phosphoglucose isomerase</fullName>
        <shortName evidence="1">PGI</shortName>
    </alternativeName>
    <alternativeName>
        <fullName evidence="1">Phosphohexose isomerase</fullName>
        <shortName evidence="1">PHI</shortName>
    </alternativeName>
</protein>
<reference key="1">
    <citation type="journal article" date="2009" name="Proc. Natl. Acad. Sci. U.S.A.">
        <title>The genomic basis of trophic strategy in marine bacteria.</title>
        <authorList>
            <person name="Lauro F.M."/>
            <person name="McDougald D."/>
            <person name="Thomas T."/>
            <person name="Williams T.J."/>
            <person name="Egan S."/>
            <person name="Rice S."/>
            <person name="DeMaere M.Z."/>
            <person name="Ting L."/>
            <person name="Ertan H."/>
            <person name="Johnson J."/>
            <person name="Ferriera S."/>
            <person name="Lapidus A."/>
            <person name="Anderson I."/>
            <person name="Kyrpides N."/>
            <person name="Munk A.C."/>
            <person name="Detter C."/>
            <person name="Han C.S."/>
            <person name="Brown M.V."/>
            <person name="Robb F.T."/>
            <person name="Kjelleberg S."/>
            <person name="Cavicchioli R."/>
        </authorList>
    </citation>
    <scope>NUCLEOTIDE SEQUENCE [LARGE SCALE GENOMIC DNA]</scope>
    <source>
        <strain>DSM 13593 / LMG 18877 / RB2256</strain>
    </source>
</reference>
<gene>
    <name evidence="1" type="primary">pgi</name>
    <name type="ordered locus">Sala_1215</name>
</gene>